<gene>
    <name type="primary">UGD2</name>
    <name type="synonym">UGD</name>
    <name type="ordered locus">At3g29360</name>
    <name type="ORF">MUO10.18</name>
    <name type="ORF">MUO10_6</name>
</gene>
<feature type="chain" id="PRO_0000312027" description="UDP-glucose 6-dehydrogenase 2">
    <location>
        <begin position="1"/>
        <end position="480"/>
    </location>
</feature>
<feature type="active site" description="Nucleophile" evidence="1">
    <location>
        <position position="272"/>
    </location>
</feature>
<feature type="binding site" evidence="1">
    <location>
        <begin position="8"/>
        <end position="13"/>
    </location>
    <ligand>
        <name>NAD(+)</name>
        <dbReference type="ChEBI" id="CHEBI:57540"/>
    </ligand>
</feature>
<feature type="binding site" evidence="1">
    <location>
        <position position="33"/>
    </location>
    <ligand>
        <name>NAD(+)</name>
        <dbReference type="ChEBI" id="CHEBI:57540"/>
    </ligand>
</feature>
<feature type="binding site" evidence="1">
    <location>
        <position position="38"/>
    </location>
    <ligand>
        <name>NAD(+)</name>
        <dbReference type="ChEBI" id="CHEBI:57540"/>
    </ligand>
</feature>
<feature type="binding site" evidence="1">
    <location>
        <begin position="86"/>
        <end position="90"/>
    </location>
    <ligand>
        <name>NAD(+)</name>
        <dbReference type="ChEBI" id="CHEBI:57540"/>
    </ligand>
</feature>
<feature type="binding site" evidence="1">
    <location>
        <begin position="127"/>
        <end position="128"/>
    </location>
    <ligand>
        <name>NAD(+)</name>
        <dbReference type="ChEBI" id="CHEBI:57540"/>
    </ligand>
</feature>
<feature type="binding site" evidence="1">
    <location>
        <begin position="157"/>
        <end position="161"/>
    </location>
    <ligand>
        <name>substrate</name>
    </ligand>
</feature>
<feature type="binding site" evidence="1">
    <location>
        <position position="161"/>
    </location>
    <ligand>
        <name>NAD(+)</name>
        <dbReference type="ChEBI" id="CHEBI:57540"/>
    </ligand>
</feature>
<feature type="binding site" evidence="1">
    <location>
        <begin position="216"/>
        <end position="223"/>
    </location>
    <ligand>
        <name>substrate</name>
    </ligand>
</feature>
<feature type="binding site" evidence="1">
    <location>
        <begin position="256"/>
        <end position="269"/>
    </location>
    <ligand>
        <name>substrate</name>
    </ligand>
</feature>
<feature type="binding site" evidence="1">
    <location>
        <begin position="272"/>
        <end position="275"/>
    </location>
    <ligand>
        <name>NAD(+)</name>
        <dbReference type="ChEBI" id="CHEBI:57540"/>
    </ligand>
</feature>
<feature type="binding site" evidence="1">
    <location>
        <begin position="334"/>
        <end position="335"/>
    </location>
    <ligand>
        <name>substrate</name>
    </ligand>
</feature>
<feature type="binding site" evidence="1">
    <location>
        <position position="342"/>
    </location>
    <ligand>
        <name>NAD(+)</name>
        <dbReference type="ChEBI" id="CHEBI:57540"/>
    </ligand>
</feature>
<feature type="binding site" evidence="1">
    <location>
        <position position="447"/>
    </location>
    <ligand>
        <name>substrate</name>
    </ligand>
</feature>
<feature type="sequence conflict" description="In Ref. 3; AAL11570." evidence="6" ref="3">
    <original>V</original>
    <variation>I</variation>
    <location>
        <position position="12"/>
    </location>
</feature>
<feature type="sequence conflict" description="In Ref. 3; AAL11570." evidence="6" ref="3">
    <original>G</original>
    <variation>R</variation>
    <location>
        <position position="178"/>
    </location>
</feature>
<feature type="sequence conflict" description="In Ref. 7; AAM67208." evidence="6" ref="7">
    <original>N</original>
    <variation>D</variation>
    <location>
        <position position="193"/>
    </location>
</feature>
<name>UGDH2_ARATH</name>
<dbReference type="EC" id="1.1.1.22" evidence="3"/>
<dbReference type="EMBL" id="AP001309">
    <property type="protein sequence ID" value="BAB02581.1"/>
    <property type="molecule type" value="Genomic_DNA"/>
</dbReference>
<dbReference type="EMBL" id="CP002686">
    <property type="protein sequence ID" value="AEE77573.1"/>
    <property type="molecule type" value="Genomic_DNA"/>
</dbReference>
<dbReference type="EMBL" id="CP002686">
    <property type="protein sequence ID" value="AEE77574.1"/>
    <property type="molecule type" value="Genomic_DNA"/>
</dbReference>
<dbReference type="EMBL" id="AF424576">
    <property type="protein sequence ID" value="AAL11570.1"/>
    <property type="molecule type" value="mRNA"/>
</dbReference>
<dbReference type="EMBL" id="BT021126">
    <property type="protein sequence ID" value="AAX22261.1"/>
    <property type="molecule type" value="mRNA"/>
</dbReference>
<dbReference type="EMBL" id="AK226539">
    <property type="protein sequence ID" value="BAE98678.1"/>
    <property type="molecule type" value="mRNA"/>
</dbReference>
<dbReference type="EMBL" id="BT029164">
    <property type="protein sequence ID" value="ABJ17099.1"/>
    <property type="molecule type" value="mRNA"/>
</dbReference>
<dbReference type="EMBL" id="AY088902">
    <property type="protein sequence ID" value="AAM67208.1"/>
    <property type="molecule type" value="mRNA"/>
</dbReference>
<dbReference type="RefSeq" id="NP_001030792.1">
    <property type="nucleotide sequence ID" value="NM_001035715.1"/>
</dbReference>
<dbReference type="RefSeq" id="NP_189582.1">
    <property type="nucleotide sequence ID" value="NM_113861.4"/>
</dbReference>
<dbReference type="SMR" id="Q9LIA8"/>
<dbReference type="BioGRID" id="7923">
    <property type="interactions" value="1"/>
</dbReference>
<dbReference type="FunCoup" id="Q9LIA8">
    <property type="interactions" value="2852"/>
</dbReference>
<dbReference type="IntAct" id="Q9LIA8">
    <property type="interactions" value="2"/>
</dbReference>
<dbReference type="STRING" id="3702.Q9LIA8"/>
<dbReference type="iPTMnet" id="Q9LIA8"/>
<dbReference type="PaxDb" id="3702-AT3G29360.1"/>
<dbReference type="ProteomicsDB" id="246390"/>
<dbReference type="EnsemblPlants" id="AT3G29360.1">
    <property type="protein sequence ID" value="AT3G29360.1"/>
    <property type="gene ID" value="AT3G29360"/>
</dbReference>
<dbReference type="EnsemblPlants" id="AT3G29360.2">
    <property type="protein sequence ID" value="AT3G29360.2"/>
    <property type="gene ID" value="AT3G29360"/>
</dbReference>
<dbReference type="GeneID" id="822594"/>
<dbReference type="Gramene" id="AT3G29360.1">
    <property type="protein sequence ID" value="AT3G29360.1"/>
    <property type="gene ID" value="AT3G29360"/>
</dbReference>
<dbReference type="Gramene" id="AT3G29360.2">
    <property type="protein sequence ID" value="AT3G29360.2"/>
    <property type="gene ID" value="AT3G29360"/>
</dbReference>
<dbReference type="KEGG" id="ath:AT3G29360"/>
<dbReference type="Araport" id="AT3G29360"/>
<dbReference type="TAIR" id="AT3G29360">
    <property type="gene designation" value="UGD2"/>
</dbReference>
<dbReference type="eggNOG" id="KOG2666">
    <property type="taxonomic scope" value="Eukaryota"/>
</dbReference>
<dbReference type="HOGENOM" id="CLU_023810_7_0_1"/>
<dbReference type="InParanoid" id="Q9LIA8"/>
<dbReference type="OMA" id="GYIYHSI"/>
<dbReference type="PhylomeDB" id="Q9LIA8"/>
<dbReference type="BioCyc" id="ARA:AT3G29360-MONOMER"/>
<dbReference type="BRENDA" id="1.1.1.22">
    <property type="organism ID" value="399"/>
</dbReference>
<dbReference type="SABIO-RK" id="Q9LIA8"/>
<dbReference type="UniPathway" id="UPA00038">
    <property type="reaction ID" value="UER00491"/>
</dbReference>
<dbReference type="CD-CODE" id="4299E36E">
    <property type="entry name" value="Nucleolus"/>
</dbReference>
<dbReference type="PRO" id="PR:Q9LIA8"/>
<dbReference type="Proteomes" id="UP000006548">
    <property type="component" value="Chromosome 3"/>
</dbReference>
<dbReference type="ExpressionAtlas" id="Q9LIA8">
    <property type="expression patterns" value="baseline and differential"/>
</dbReference>
<dbReference type="GO" id="GO:0099503">
    <property type="term" value="C:secretory vesicle"/>
    <property type="evidence" value="ECO:0007005"/>
    <property type="project" value="TAIR"/>
</dbReference>
<dbReference type="GO" id="GO:0051287">
    <property type="term" value="F:NAD binding"/>
    <property type="evidence" value="ECO:0007669"/>
    <property type="project" value="InterPro"/>
</dbReference>
<dbReference type="GO" id="GO:0003979">
    <property type="term" value="F:UDP-glucose 6-dehydrogenase activity"/>
    <property type="evidence" value="ECO:0000314"/>
    <property type="project" value="UniProtKB"/>
</dbReference>
<dbReference type="GO" id="GO:0005975">
    <property type="term" value="P:carbohydrate metabolic process"/>
    <property type="evidence" value="ECO:0000316"/>
    <property type="project" value="TAIR"/>
</dbReference>
<dbReference type="GO" id="GO:0052546">
    <property type="term" value="P:cell wall pectin metabolic process"/>
    <property type="evidence" value="ECO:0000316"/>
    <property type="project" value="TAIR"/>
</dbReference>
<dbReference type="GO" id="GO:0006065">
    <property type="term" value="P:UDP-glucuronate biosynthetic process"/>
    <property type="evidence" value="ECO:0000314"/>
    <property type="project" value="UniProtKB"/>
</dbReference>
<dbReference type="FunFam" id="1.20.5.100:FF:000001">
    <property type="entry name" value="UDP-glucose 6-dehydrogenase"/>
    <property type="match status" value="1"/>
</dbReference>
<dbReference type="FunFam" id="3.40.50.720:FF:000032">
    <property type="entry name" value="UDP-glucose 6-dehydrogenase"/>
    <property type="match status" value="1"/>
</dbReference>
<dbReference type="FunFam" id="3.40.50.720:FF:000089">
    <property type="entry name" value="UDP-glucose 6-dehydrogenase"/>
    <property type="match status" value="1"/>
</dbReference>
<dbReference type="Gene3D" id="1.20.5.100">
    <property type="entry name" value="Cytochrome c1, transmembrane anchor, C-terminal"/>
    <property type="match status" value="1"/>
</dbReference>
<dbReference type="Gene3D" id="3.40.50.720">
    <property type="entry name" value="NAD(P)-binding Rossmann-like Domain"/>
    <property type="match status" value="2"/>
</dbReference>
<dbReference type="InterPro" id="IPR008927">
    <property type="entry name" value="6-PGluconate_DH-like_C_sf"/>
</dbReference>
<dbReference type="InterPro" id="IPR036291">
    <property type="entry name" value="NAD(P)-bd_dom_sf"/>
</dbReference>
<dbReference type="InterPro" id="IPR017476">
    <property type="entry name" value="UDP-Glc/GDP-Man"/>
</dbReference>
<dbReference type="InterPro" id="IPR014027">
    <property type="entry name" value="UDP-Glc/GDP-Man_DH_C"/>
</dbReference>
<dbReference type="InterPro" id="IPR036220">
    <property type="entry name" value="UDP-Glc/GDP-Man_DH_C_sf"/>
</dbReference>
<dbReference type="InterPro" id="IPR014026">
    <property type="entry name" value="UDP-Glc/GDP-Man_DH_dimer"/>
</dbReference>
<dbReference type="InterPro" id="IPR001732">
    <property type="entry name" value="UDP-Glc/GDP-Man_DH_N"/>
</dbReference>
<dbReference type="InterPro" id="IPR028356">
    <property type="entry name" value="UDPglc_DH_euk"/>
</dbReference>
<dbReference type="NCBIfam" id="TIGR03026">
    <property type="entry name" value="NDP-sugDHase"/>
    <property type="match status" value="1"/>
</dbReference>
<dbReference type="PANTHER" id="PTHR11374:SF64">
    <property type="entry name" value="UDP-GLUCOSE 6-DEHYDROGENASE 2"/>
    <property type="match status" value="1"/>
</dbReference>
<dbReference type="PANTHER" id="PTHR11374">
    <property type="entry name" value="UDP-GLUCOSE DEHYDROGENASE/UDP-MANNAC DEHYDROGENASE"/>
    <property type="match status" value="1"/>
</dbReference>
<dbReference type="Pfam" id="PF00984">
    <property type="entry name" value="UDPG_MGDP_dh"/>
    <property type="match status" value="1"/>
</dbReference>
<dbReference type="Pfam" id="PF03720">
    <property type="entry name" value="UDPG_MGDP_dh_C"/>
    <property type="match status" value="1"/>
</dbReference>
<dbReference type="Pfam" id="PF03721">
    <property type="entry name" value="UDPG_MGDP_dh_N"/>
    <property type="match status" value="1"/>
</dbReference>
<dbReference type="PIRSF" id="PIRSF500133">
    <property type="entry name" value="UDPglc_DH_euk"/>
    <property type="match status" value="1"/>
</dbReference>
<dbReference type="PIRSF" id="PIRSF000124">
    <property type="entry name" value="UDPglc_GDPman_dh"/>
    <property type="match status" value="1"/>
</dbReference>
<dbReference type="SMART" id="SM00984">
    <property type="entry name" value="UDPG_MGDP_dh_C"/>
    <property type="match status" value="1"/>
</dbReference>
<dbReference type="SUPFAM" id="SSF48179">
    <property type="entry name" value="6-phosphogluconate dehydrogenase C-terminal domain-like"/>
    <property type="match status" value="1"/>
</dbReference>
<dbReference type="SUPFAM" id="SSF51735">
    <property type="entry name" value="NAD(P)-binding Rossmann-fold domains"/>
    <property type="match status" value="1"/>
</dbReference>
<dbReference type="SUPFAM" id="SSF52413">
    <property type="entry name" value="UDP-glucose/GDP-mannose dehydrogenase C-terminal domain"/>
    <property type="match status" value="1"/>
</dbReference>
<protein>
    <recommendedName>
        <fullName>UDP-glucose 6-dehydrogenase 2</fullName>
        <shortName>UDP-Glc dehydrogenase 2</shortName>
        <shortName>UDP-GlcDH 2</shortName>
        <shortName>UDPGDH 2</shortName>
        <ecNumber evidence="3">1.1.1.22</ecNumber>
    </recommendedName>
    <alternativeName>
        <fullName>At-UGD2</fullName>
    </alternativeName>
</protein>
<accession>Q9LIA8</accession>
<accession>Q8L8N1</accession>
<accession>Q944R8</accession>
<keyword id="KW-0520">NAD</keyword>
<keyword id="KW-0560">Oxidoreductase</keyword>
<keyword id="KW-1185">Reference proteome</keyword>
<comment type="function">
    <text evidence="2 3 4 5">Involved in the biosynthesis of UDP-glucuronic acid (UDP-GlcA), providing nucleotide sugars for cell-wall polymers. Required for the formation of cell wall ingrowths on the outer cell walls of nematode-induced syncytia.</text>
</comment>
<comment type="catalytic activity">
    <reaction evidence="3">
        <text>UDP-alpha-D-glucose + 2 NAD(+) + H2O = UDP-alpha-D-glucuronate + 2 NADH + 3 H(+)</text>
        <dbReference type="Rhea" id="RHEA:23596"/>
        <dbReference type="ChEBI" id="CHEBI:15377"/>
        <dbReference type="ChEBI" id="CHEBI:15378"/>
        <dbReference type="ChEBI" id="CHEBI:57540"/>
        <dbReference type="ChEBI" id="CHEBI:57945"/>
        <dbReference type="ChEBI" id="CHEBI:58052"/>
        <dbReference type="ChEBI" id="CHEBI:58885"/>
        <dbReference type="EC" id="1.1.1.22"/>
    </reaction>
</comment>
<comment type="activity regulation">
    <text evidence="3">Inhibited by UDP-xylose.</text>
</comment>
<comment type="biophysicochemical properties">
    <kinetics>
        <KM evidence="3">43 uM for NAD(+)</KM>
        <KM evidence="3">123 uM for UDP-glucose</KM>
    </kinetics>
</comment>
<comment type="pathway">
    <text evidence="7">Nucleotide-sugar biosynthesis; UDP-alpha-D-glucuronate biosynthesis; UDP-alpha-D-glucuronate from UDP-alpha-D-glucose: step 1/1.</text>
</comment>
<comment type="tissue specificity">
    <text evidence="2">Preferentially expressed in roots.</text>
</comment>
<comment type="developmental stage">
    <text evidence="2 3">Restricted expression to the primary root in young seedlings. Later detected in hypocotyl, leaves but with the strongest expression in the root system.</text>
</comment>
<comment type="disruption phenotype">
    <text evidence="4 5">No visible phenotype. Displays smaller nematode-induced syncytia. The UGD2 UGD3 double mutant displays a strong dwarf phenotype and often develops seedlings with severe root defects; cell walls have an altered sugar composition (PubMed:21949134). Ugd2 and ugd3 double mutants display abnormal nematode-induced syncytia (PubMed:22848518).</text>
</comment>
<comment type="similarity">
    <text evidence="6">Belongs to the UDP-glucose/GDP-mannose dehydrogenase family.</text>
</comment>
<reference key="1">
    <citation type="journal article" date="2000" name="DNA Res.">
        <title>Structural analysis of Arabidopsis thaliana chromosome 3. II. Sequence features of the 4,251,695 bp regions covered by 90 P1, TAC and BAC clones.</title>
        <authorList>
            <person name="Kaneko T."/>
            <person name="Katoh T."/>
            <person name="Sato S."/>
            <person name="Nakamura Y."/>
            <person name="Asamizu E."/>
            <person name="Tabata S."/>
        </authorList>
    </citation>
    <scope>NUCLEOTIDE SEQUENCE [LARGE SCALE GENOMIC DNA]</scope>
    <source>
        <strain>cv. Columbia</strain>
    </source>
</reference>
<reference key="2">
    <citation type="journal article" date="2017" name="Plant J.">
        <title>Araport11: a complete reannotation of the Arabidopsis thaliana reference genome.</title>
        <authorList>
            <person name="Cheng C.Y."/>
            <person name="Krishnakumar V."/>
            <person name="Chan A.P."/>
            <person name="Thibaud-Nissen F."/>
            <person name="Schobel S."/>
            <person name="Town C.D."/>
        </authorList>
    </citation>
    <scope>GENOME REANNOTATION</scope>
    <source>
        <strain>cv. Columbia</strain>
    </source>
</reference>
<reference key="3">
    <citation type="journal article" date="2003" name="Science">
        <title>Empirical analysis of transcriptional activity in the Arabidopsis genome.</title>
        <authorList>
            <person name="Yamada K."/>
            <person name="Lim J."/>
            <person name="Dale J.M."/>
            <person name="Chen H."/>
            <person name="Shinn P."/>
            <person name="Palm C.J."/>
            <person name="Southwick A.M."/>
            <person name="Wu H.C."/>
            <person name="Kim C.J."/>
            <person name="Nguyen M."/>
            <person name="Pham P.K."/>
            <person name="Cheuk R.F."/>
            <person name="Karlin-Newmann G."/>
            <person name="Liu S.X."/>
            <person name="Lam B."/>
            <person name="Sakano H."/>
            <person name="Wu T."/>
            <person name="Yu G."/>
            <person name="Miranda M."/>
            <person name="Quach H.L."/>
            <person name="Tripp M."/>
            <person name="Chang C.H."/>
            <person name="Lee J.M."/>
            <person name="Toriumi M.J."/>
            <person name="Chan M.M."/>
            <person name="Tang C.C."/>
            <person name="Onodera C.S."/>
            <person name="Deng J.M."/>
            <person name="Akiyama K."/>
            <person name="Ansari Y."/>
            <person name="Arakawa T."/>
            <person name="Banh J."/>
            <person name="Banno F."/>
            <person name="Bowser L."/>
            <person name="Brooks S.Y."/>
            <person name="Carninci P."/>
            <person name="Chao Q."/>
            <person name="Choy N."/>
            <person name="Enju A."/>
            <person name="Goldsmith A.D."/>
            <person name="Gurjal M."/>
            <person name="Hansen N.F."/>
            <person name="Hayashizaki Y."/>
            <person name="Johnson-Hopson C."/>
            <person name="Hsuan V.W."/>
            <person name="Iida K."/>
            <person name="Karnes M."/>
            <person name="Khan S."/>
            <person name="Koesema E."/>
            <person name="Ishida J."/>
            <person name="Jiang P.X."/>
            <person name="Jones T."/>
            <person name="Kawai J."/>
            <person name="Kamiya A."/>
            <person name="Meyers C."/>
            <person name="Nakajima M."/>
            <person name="Narusaka M."/>
            <person name="Seki M."/>
            <person name="Sakurai T."/>
            <person name="Satou M."/>
            <person name="Tamse R."/>
            <person name="Vaysberg M."/>
            <person name="Wallender E.K."/>
            <person name="Wong C."/>
            <person name="Yamamura Y."/>
            <person name="Yuan S."/>
            <person name="Shinozaki K."/>
            <person name="Davis R.W."/>
            <person name="Theologis A."/>
            <person name="Ecker J.R."/>
        </authorList>
    </citation>
    <scope>NUCLEOTIDE SEQUENCE [LARGE SCALE MRNA]</scope>
    <source>
        <strain>cv. Columbia</strain>
    </source>
</reference>
<reference key="4">
    <citation type="submission" date="2005-03" db="EMBL/GenBank/DDBJ databases">
        <title>Arabidopsis ORF clones.</title>
        <authorList>
            <person name="Cheuk R.F."/>
            <person name="Chen H."/>
            <person name="Kim C.J."/>
            <person name="Shinn P."/>
            <person name="Ecker J.R."/>
        </authorList>
    </citation>
    <scope>NUCLEOTIDE SEQUENCE [LARGE SCALE MRNA]</scope>
    <source>
        <strain>cv. Columbia</strain>
    </source>
</reference>
<reference key="5">
    <citation type="submission" date="2006-07" db="EMBL/GenBank/DDBJ databases">
        <title>Large-scale analysis of RIKEN Arabidopsis full-length (RAFL) cDNAs.</title>
        <authorList>
            <person name="Totoki Y."/>
            <person name="Seki M."/>
            <person name="Ishida J."/>
            <person name="Nakajima M."/>
            <person name="Enju A."/>
            <person name="Kamiya A."/>
            <person name="Narusaka M."/>
            <person name="Shin-i T."/>
            <person name="Nakagawa M."/>
            <person name="Sakamoto N."/>
            <person name="Oishi K."/>
            <person name="Kohara Y."/>
            <person name="Kobayashi M."/>
            <person name="Toyoda A."/>
            <person name="Sakaki Y."/>
            <person name="Sakurai T."/>
            <person name="Iida K."/>
            <person name="Akiyama K."/>
            <person name="Satou M."/>
            <person name="Toyoda T."/>
            <person name="Konagaya A."/>
            <person name="Carninci P."/>
            <person name="Kawai J."/>
            <person name="Hayashizaki Y."/>
            <person name="Shinozaki K."/>
        </authorList>
    </citation>
    <scope>NUCLEOTIDE SEQUENCE [LARGE SCALE MRNA]</scope>
    <source>
        <strain>cv. Columbia</strain>
    </source>
</reference>
<reference key="6">
    <citation type="submission" date="2006-10" db="EMBL/GenBank/DDBJ databases">
        <title>Arabidopsis ORF Clone.</title>
        <authorList>
            <person name="Bautista V.R."/>
            <person name="Kim C.J."/>
            <person name="Chen H."/>
            <person name="Quinitio C."/>
            <person name="Ecker J.R."/>
        </authorList>
    </citation>
    <scope>NUCLEOTIDE SEQUENCE [LARGE SCALE MRNA]</scope>
    <source>
        <strain>cv. Columbia</strain>
    </source>
</reference>
<reference key="7">
    <citation type="submission" date="2002-03" db="EMBL/GenBank/DDBJ databases">
        <title>Full-length cDNA from Arabidopsis thaliana.</title>
        <authorList>
            <person name="Brover V.V."/>
            <person name="Troukhan M.E."/>
            <person name="Alexandrov N.A."/>
            <person name="Lu Y.-P."/>
            <person name="Flavell R.B."/>
            <person name="Feldmann K.A."/>
        </authorList>
    </citation>
    <scope>NUCLEOTIDE SEQUENCE [LARGE SCALE MRNA]</scope>
</reference>
<reference key="8">
    <citation type="journal article" date="2000" name="Plant J.">
        <title>Matrix polysaccharide precursors in Arabidopsis cell walls are synthesized by alternate pathways with organ-specific expression patterns.</title>
        <authorList>
            <person name="Seitz B."/>
            <person name="Klos C."/>
            <person name="Wurm M."/>
            <person name="Tenhaken R."/>
        </authorList>
    </citation>
    <scope>FUNCTION</scope>
    <scope>TISSUE SPECIFICITY</scope>
    <scope>DEVELOPMENTAL STAGE</scope>
</reference>
<reference key="9">
    <citation type="journal article" date="2001" name="Plant Mol. Biol.">
        <title>Molecular genetics of nucleotide sugar interconversion pathways in plants.</title>
        <authorList>
            <person name="Reiter W.-D."/>
            <person name="Vanzin G.F."/>
        </authorList>
    </citation>
    <scope>GENE FAMILY</scope>
</reference>
<reference key="10">
    <citation type="journal article" date="2004" name="Curr. Opin. Plant Biol.">
        <title>Nucleotide sugar interconversions and cell wall biosynthesis: how to bring the inside to the outside.</title>
        <authorList>
            <person name="Seifert G.J."/>
        </authorList>
    </citation>
    <scope>REVIEW</scope>
</reference>
<reference key="11">
    <citation type="journal article" date="2007" name="J. Exp. Bot.">
        <title>Genome-wide analysis of the UDP-glucose dehydrogenase gene family in Arabidopsis, a key enzyme for matrix polysaccharides in cell walls.</title>
        <authorList>
            <person name="Klinghammer M."/>
            <person name="Tenhaken R."/>
        </authorList>
    </citation>
    <scope>GENE FAMILY</scope>
    <scope>NOMENCLATURE</scope>
    <scope>FUNCTION</scope>
    <scope>CATALYTIC ACTIVITY</scope>
    <scope>BIOPHYSICOCHEMICAL PROPERTIES</scope>
    <scope>ACTIVITY REGULATION</scope>
    <scope>PATHWAY</scope>
    <scope>DEVELOPMENTAL STAGE</scope>
</reference>
<reference key="12">
    <citation type="journal article" date="2011" name="J. Biol. Chem.">
        <title>Down-regulation of UDP-glucuronic acid biosynthesis leads to swollen plant cell walls and severe developmental defects associated with changes in pectic polysaccharides.</title>
        <authorList>
            <person name="Reboul R."/>
            <person name="Geserick C."/>
            <person name="Pabst M."/>
            <person name="Frey B."/>
            <person name="Wittmann D."/>
            <person name="Luetz-Meindl U."/>
            <person name="Leonard R."/>
            <person name="Tenhaken R."/>
        </authorList>
    </citation>
    <scope>DISRUPTION PHENOTYPE</scope>
    <scope>FUNCTION</scope>
</reference>
<reference key="13">
    <citation type="journal article" date="2012" name="PLoS ONE">
        <title>Cell wall ingrowths in nematode induced syncytia require UGD2 and UGD3.</title>
        <authorList>
            <person name="Siddique S."/>
            <person name="Sobczak M."/>
            <person name="Tenhaken R."/>
            <person name="Grundler F.M."/>
            <person name="Bohlmann H."/>
        </authorList>
    </citation>
    <scope>DISRUPTION PHENOTYPE</scope>
    <scope>FUNCTION</scope>
</reference>
<sequence length="480" mass="53173">MVKICCIGAGYVGGPTMAVIALKCPDVEVAVVDISVPRINAWNSDTLPIYEPGLDDVVKQCRGKNLFFSTDVEKHVREADIVFVSVNTPTKTRGLGAGKAADLTYWESAARMIADVSVSDKIVVEKSTVPVKTAEAIEKILTHNSKGIKFQILSNPEFLAEGTAIKDLFNPDRVLIGGRETPEGFKAVQTLKNVYAHWVPEGQIITTNLWSAELSKLAANAFLAQRISSVNAMSALCEATGADVTQVSYAVGTDSRIGPKFLNSSVGFGGSCFQKDILNLVYICECNGLPEVAEYWKQVIKINDYQKSRFVNRVVSSMFNSVSNKKIAVLGFAFKKDTGDTRETPAIDVCKGLLEDKARLSIYDPQVTEDQIQRDLSMNKFDWDHPLHLQPMSPTTVKQVTVTWDAYEATKDAHGICIMTEWDEFKNLDFQKIFDNMQKPAFVFDGRNIMNLQKLREIGFIVYSIGKPLDDWLKDMPAVA</sequence>
<evidence type="ECO:0000250" key="1"/>
<evidence type="ECO:0000269" key="2">
    <source>
    </source>
</evidence>
<evidence type="ECO:0000269" key="3">
    <source>
    </source>
</evidence>
<evidence type="ECO:0000269" key="4">
    <source>
    </source>
</evidence>
<evidence type="ECO:0000269" key="5">
    <source>
    </source>
</evidence>
<evidence type="ECO:0000305" key="6"/>
<evidence type="ECO:0000305" key="7">
    <source>
    </source>
</evidence>
<organism>
    <name type="scientific">Arabidopsis thaliana</name>
    <name type="common">Mouse-ear cress</name>
    <dbReference type="NCBI Taxonomy" id="3702"/>
    <lineage>
        <taxon>Eukaryota</taxon>
        <taxon>Viridiplantae</taxon>
        <taxon>Streptophyta</taxon>
        <taxon>Embryophyta</taxon>
        <taxon>Tracheophyta</taxon>
        <taxon>Spermatophyta</taxon>
        <taxon>Magnoliopsida</taxon>
        <taxon>eudicotyledons</taxon>
        <taxon>Gunneridae</taxon>
        <taxon>Pentapetalae</taxon>
        <taxon>rosids</taxon>
        <taxon>malvids</taxon>
        <taxon>Brassicales</taxon>
        <taxon>Brassicaceae</taxon>
        <taxon>Camelineae</taxon>
        <taxon>Arabidopsis</taxon>
    </lineage>
</organism>
<proteinExistence type="evidence at protein level"/>